<dbReference type="EMBL" id="CP000727">
    <property type="protein sequence ID" value="ABS36539.1"/>
    <property type="molecule type" value="Genomic_DNA"/>
</dbReference>
<dbReference type="EMBL" id="AM412317">
    <property type="protein sequence ID" value="CAL84636.1"/>
    <property type="molecule type" value="Genomic_DNA"/>
</dbReference>
<dbReference type="RefSeq" id="WP_012048090.1">
    <property type="nucleotide sequence ID" value="NC_009698.1"/>
</dbReference>
<dbReference type="RefSeq" id="YP_001255565.1">
    <property type="nucleotide sequence ID" value="NC_009495.1"/>
</dbReference>
<dbReference type="RefSeq" id="YP_001388802.1">
    <property type="nucleotide sequence ID" value="NC_009698.1"/>
</dbReference>
<dbReference type="SMR" id="A5I6F4"/>
<dbReference type="GeneID" id="5187330"/>
<dbReference type="KEGG" id="cbh:CLC_2975"/>
<dbReference type="KEGG" id="cbo:CBO3073"/>
<dbReference type="PATRIC" id="fig|413999.7.peg.3051"/>
<dbReference type="HOGENOM" id="CLU_062974_2_2_9"/>
<dbReference type="PRO" id="PR:A5I6F4"/>
<dbReference type="Proteomes" id="UP000001986">
    <property type="component" value="Chromosome"/>
</dbReference>
<dbReference type="GO" id="GO:0005829">
    <property type="term" value="C:cytosol"/>
    <property type="evidence" value="ECO:0000318"/>
    <property type="project" value="GO_Central"/>
</dbReference>
<dbReference type="GO" id="GO:0003677">
    <property type="term" value="F:DNA binding"/>
    <property type="evidence" value="ECO:0007669"/>
    <property type="project" value="UniProtKB-UniRule"/>
</dbReference>
<dbReference type="GO" id="GO:0006355">
    <property type="term" value="P:regulation of DNA-templated transcription"/>
    <property type="evidence" value="ECO:0007669"/>
    <property type="project" value="UniProtKB-UniRule"/>
</dbReference>
<dbReference type="FunFam" id="1.10.10.200:FF:000002">
    <property type="entry name" value="Probable transcriptional regulatory protein CLM62_37755"/>
    <property type="match status" value="1"/>
</dbReference>
<dbReference type="FunFam" id="3.30.70.980:FF:000002">
    <property type="entry name" value="Probable transcriptional regulatory protein YebC"/>
    <property type="match status" value="1"/>
</dbReference>
<dbReference type="Gene3D" id="1.10.10.200">
    <property type="match status" value="1"/>
</dbReference>
<dbReference type="Gene3D" id="3.30.70.980">
    <property type="match status" value="2"/>
</dbReference>
<dbReference type="HAMAP" id="MF_00693">
    <property type="entry name" value="Transcrip_reg_TACO1"/>
    <property type="match status" value="1"/>
</dbReference>
<dbReference type="InterPro" id="IPR017856">
    <property type="entry name" value="Integrase-like_N"/>
</dbReference>
<dbReference type="InterPro" id="IPR048300">
    <property type="entry name" value="TACO1_YebC-like_2nd/3rd_dom"/>
</dbReference>
<dbReference type="InterPro" id="IPR049083">
    <property type="entry name" value="TACO1_YebC_N"/>
</dbReference>
<dbReference type="InterPro" id="IPR002876">
    <property type="entry name" value="Transcrip_reg_TACO1-like"/>
</dbReference>
<dbReference type="InterPro" id="IPR026564">
    <property type="entry name" value="Transcrip_reg_TACO1-like_dom3"/>
</dbReference>
<dbReference type="InterPro" id="IPR029072">
    <property type="entry name" value="YebC-like"/>
</dbReference>
<dbReference type="NCBIfam" id="NF001030">
    <property type="entry name" value="PRK00110.1"/>
    <property type="match status" value="1"/>
</dbReference>
<dbReference type="NCBIfam" id="NF009044">
    <property type="entry name" value="PRK12378.1"/>
    <property type="match status" value="1"/>
</dbReference>
<dbReference type="NCBIfam" id="TIGR01033">
    <property type="entry name" value="YebC/PmpR family DNA-binding transcriptional regulator"/>
    <property type="match status" value="1"/>
</dbReference>
<dbReference type="PANTHER" id="PTHR12532:SF6">
    <property type="entry name" value="TRANSCRIPTIONAL REGULATORY PROTEIN YEBC-RELATED"/>
    <property type="match status" value="1"/>
</dbReference>
<dbReference type="PANTHER" id="PTHR12532">
    <property type="entry name" value="TRANSLATIONAL ACTIVATOR OF CYTOCHROME C OXIDASE 1"/>
    <property type="match status" value="1"/>
</dbReference>
<dbReference type="Pfam" id="PF20772">
    <property type="entry name" value="TACO1_YebC_N"/>
    <property type="match status" value="1"/>
</dbReference>
<dbReference type="Pfam" id="PF01709">
    <property type="entry name" value="Transcrip_reg"/>
    <property type="match status" value="1"/>
</dbReference>
<dbReference type="SUPFAM" id="SSF75625">
    <property type="entry name" value="YebC-like"/>
    <property type="match status" value="1"/>
</dbReference>
<proteinExistence type="inferred from homology"/>
<reference key="1">
    <citation type="journal article" date="2007" name="Genome Res.">
        <title>Genome sequence of a proteolytic (Group I) Clostridium botulinum strain Hall A and comparative analysis of the clostridial genomes.</title>
        <authorList>
            <person name="Sebaihia M."/>
            <person name="Peck M.W."/>
            <person name="Minton N.P."/>
            <person name="Thomson N.R."/>
            <person name="Holden M.T.G."/>
            <person name="Mitchell W.J."/>
            <person name="Carter A.T."/>
            <person name="Bentley S.D."/>
            <person name="Mason D.R."/>
            <person name="Crossman L."/>
            <person name="Paul C.J."/>
            <person name="Ivens A."/>
            <person name="Wells-Bennik M.H.J."/>
            <person name="Davis I.J."/>
            <person name="Cerdeno-Tarraga A.M."/>
            <person name="Churcher C."/>
            <person name="Quail M.A."/>
            <person name="Chillingworth T."/>
            <person name="Feltwell T."/>
            <person name="Fraser A."/>
            <person name="Goodhead I."/>
            <person name="Hance Z."/>
            <person name="Jagels K."/>
            <person name="Larke N."/>
            <person name="Maddison M."/>
            <person name="Moule S."/>
            <person name="Mungall K."/>
            <person name="Norbertczak H."/>
            <person name="Rabbinowitsch E."/>
            <person name="Sanders M."/>
            <person name="Simmonds M."/>
            <person name="White B."/>
            <person name="Whithead S."/>
            <person name="Parkhill J."/>
        </authorList>
    </citation>
    <scope>NUCLEOTIDE SEQUENCE [LARGE SCALE GENOMIC DNA]</scope>
    <source>
        <strain>Hall / ATCC 3502 / NCTC 13319 / Type A</strain>
    </source>
</reference>
<reference key="2">
    <citation type="journal article" date="2007" name="PLoS ONE">
        <title>Analysis of the neurotoxin complex genes in Clostridium botulinum A1-A4 and B1 strains: BoNT/A3, /Ba4 and /B1 clusters are located within plasmids.</title>
        <authorList>
            <person name="Smith T.J."/>
            <person name="Hill K.K."/>
            <person name="Foley B.T."/>
            <person name="Detter J.C."/>
            <person name="Munk A.C."/>
            <person name="Bruce D.C."/>
            <person name="Doggett N.A."/>
            <person name="Smith L.A."/>
            <person name="Marks J.D."/>
            <person name="Xie G."/>
            <person name="Brettin T.S."/>
        </authorList>
    </citation>
    <scope>NUCLEOTIDE SEQUENCE [LARGE SCALE GENOMIC DNA]</scope>
    <source>
        <strain>Hall / ATCC 3502 / NCTC 13319 / Type A</strain>
    </source>
</reference>
<protein>
    <recommendedName>
        <fullName evidence="1">Probable transcriptional regulatory protein CBO3073/CLC_2975</fullName>
    </recommendedName>
</protein>
<accession>A5I6F4</accession>
<accession>A7G7N7</accession>
<keyword id="KW-0963">Cytoplasm</keyword>
<keyword id="KW-0238">DNA-binding</keyword>
<keyword id="KW-1185">Reference proteome</keyword>
<keyword id="KW-0804">Transcription</keyword>
<keyword id="KW-0805">Transcription regulation</keyword>
<name>Y3073_CLOBH</name>
<comment type="subcellular location">
    <subcellularLocation>
        <location evidence="1">Cytoplasm</location>
    </subcellularLocation>
</comment>
<comment type="similarity">
    <text evidence="1">Belongs to the TACO1 family.</text>
</comment>
<evidence type="ECO:0000255" key="1">
    <source>
        <dbReference type="HAMAP-Rule" id="MF_00693"/>
    </source>
</evidence>
<feature type="chain" id="PRO_1000045299" description="Probable transcriptional regulatory protein CBO3073/CLC_2975">
    <location>
        <begin position="1"/>
        <end position="246"/>
    </location>
</feature>
<organism>
    <name type="scientific">Clostridium botulinum (strain Hall / ATCC 3502 / NCTC 13319 / Type A)</name>
    <dbReference type="NCBI Taxonomy" id="441771"/>
    <lineage>
        <taxon>Bacteria</taxon>
        <taxon>Bacillati</taxon>
        <taxon>Bacillota</taxon>
        <taxon>Clostridia</taxon>
        <taxon>Eubacteriales</taxon>
        <taxon>Clostridiaceae</taxon>
        <taxon>Clostridium</taxon>
    </lineage>
</organism>
<sequence length="246" mass="27093">MSGHSKWHNIQAKKGKVDAKRGKIFTKIGKEIVVAVKQGGPSADSNPRLRDVIAKAKANNMPNDTIERSIKKASGELNAVDYETITYEGYGPAGIAVLVDVLTDNKNRSAGNVRYAFTKQGGNMGSTGCVSFMFQSKGQIVIEKKDGLDEDELMMMALDAGAEDFESEDEVYAVTTSQEDFGTVREALEAEGLEFLEAEIKMVPNTYTAIDEETATKFQKMLDVLEDDDDVQNVYHNAEFPEGWEE</sequence>
<gene>
    <name type="ordered locus">CBO3073</name>
    <name type="ordered locus">CLC_2975</name>
</gene>